<keyword id="KW-0687">Ribonucleoprotein</keyword>
<keyword id="KW-0689">Ribosomal protein</keyword>
<keyword id="KW-0694">RNA-binding</keyword>
<keyword id="KW-0699">rRNA-binding</keyword>
<evidence type="ECO:0000255" key="1">
    <source>
        <dbReference type="HAMAP-Rule" id="MF_00362"/>
    </source>
</evidence>
<evidence type="ECO:0000305" key="2"/>
<comment type="function">
    <text evidence="1">Forms part of the ribosomal stalk, playing a central role in the interaction of the ribosome with GTP-bound translation factors.</text>
</comment>
<comment type="subunit">
    <text evidence="1">Part of the ribosomal stalk of the 50S ribosomal subunit. The N-terminus interacts with L11 and the large rRNA to form the base of the stalk. The C-terminus forms an elongated spine to which L12 dimers bind in a sequential fashion forming a multimeric L10(L12)X complex.</text>
</comment>
<comment type="similarity">
    <text evidence="1">Belongs to the universal ribosomal protein uL10 family.</text>
</comment>
<organism>
    <name type="scientific">Desulfovibrio desulfuricans (strain ATCC 27774 / DSM 6949 / MB)</name>
    <dbReference type="NCBI Taxonomy" id="525146"/>
    <lineage>
        <taxon>Bacteria</taxon>
        <taxon>Pseudomonadati</taxon>
        <taxon>Thermodesulfobacteriota</taxon>
        <taxon>Desulfovibrionia</taxon>
        <taxon>Desulfovibrionales</taxon>
        <taxon>Desulfovibrionaceae</taxon>
        <taxon>Desulfovibrio</taxon>
    </lineage>
</organism>
<feature type="chain" id="PRO_1000195543" description="Large ribosomal subunit protein uL10">
    <location>
        <begin position="1"/>
        <end position="174"/>
    </location>
</feature>
<dbReference type="EMBL" id="CP001358">
    <property type="protein sequence ID" value="ACL49533.1"/>
    <property type="molecule type" value="Genomic_DNA"/>
</dbReference>
<dbReference type="SMR" id="B8J1A6"/>
<dbReference type="STRING" id="525146.Ddes_1634"/>
<dbReference type="KEGG" id="dds:Ddes_1634"/>
<dbReference type="eggNOG" id="COG0244">
    <property type="taxonomic scope" value="Bacteria"/>
</dbReference>
<dbReference type="HOGENOM" id="CLU_092227_2_1_7"/>
<dbReference type="GO" id="GO:0015934">
    <property type="term" value="C:large ribosomal subunit"/>
    <property type="evidence" value="ECO:0007669"/>
    <property type="project" value="InterPro"/>
</dbReference>
<dbReference type="GO" id="GO:0070180">
    <property type="term" value="F:large ribosomal subunit rRNA binding"/>
    <property type="evidence" value="ECO:0007669"/>
    <property type="project" value="UniProtKB-UniRule"/>
</dbReference>
<dbReference type="GO" id="GO:0003735">
    <property type="term" value="F:structural constituent of ribosome"/>
    <property type="evidence" value="ECO:0007669"/>
    <property type="project" value="InterPro"/>
</dbReference>
<dbReference type="GO" id="GO:0006412">
    <property type="term" value="P:translation"/>
    <property type="evidence" value="ECO:0007669"/>
    <property type="project" value="UniProtKB-UniRule"/>
</dbReference>
<dbReference type="CDD" id="cd05797">
    <property type="entry name" value="Ribosomal_L10"/>
    <property type="match status" value="1"/>
</dbReference>
<dbReference type="Gene3D" id="3.30.70.1730">
    <property type="match status" value="1"/>
</dbReference>
<dbReference type="Gene3D" id="6.10.250.290">
    <property type="match status" value="1"/>
</dbReference>
<dbReference type="HAMAP" id="MF_00362">
    <property type="entry name" value="Ribosomal_uL10"/>
    <property type="match status" value="1"/>
</dbReference>
<dbReference type="InterPro" id="IPR001790">
    <property type="entry name" value="Ribosomal_uL10"/>
</dbReference>
<dbReference type="InterPro" id="IPR043141">
    <property type="entry name" value="Ribosomal_uL10-like_sf"/>
</dbReference>
<dbReference type="InterPro" id="IPR022973">
    <property type="entry name" value="Ribosomal_uL10_bac"/>
</dbReference>
<dbReference type="InterPro" id="IPR047865">
    <property type="entry name" value="Ribosomal_uL10_bac_type"/>
</dbReference>
<dbReference type="InterPro" id="IPR002363">
    <property type="entry name" value="Ribosomal_uL10_CS_bac"/>
</dbReference>
<dbReference type="NCBIfam" id="NF000955">
    <property type="entry name" value="PRK00099.1-1"/>
    <property type="match status" value="1"/>
</dbReference>
<dbReference type="PANTHER" id="PTHR11560">
    <property type="entry name" value="39S RIBOSOMAL PROTEIN L10, MITOCHONDRIAL"/>
    <property type="match status" value="1"/>
</dbReference>
<dbReference type="Pfam" id="PF00466">
    <property type="entry name" value="Ribosomal_L10"/>
    <property type="match status" value="1"/>
</dbReference>
<dbReference type="SUPFAM" id="SSF160369">
    <property type="entry name" value="Ribosomal protein L10-like"/>
    <property type="match status" value="1"/>
</dbReference>
<dbReference type="PROSITE" id="PS01109">
    <property type="entry name" value="RIBOSOMAL_L10"/>
    <property type="match status" value="1"/>
</dbReference>
<reference key="1">
    <citation type="submission" date="2009-01" db="EMBL/GenBank/DDBJ databases">
        <title>Complete sequence of Desulfovibrio desulfuricans subsp. desulfuricans str. ATCC 27774.</title>
        <authorList>
            <consortium name="US DOE Joint Genome Institute"/>
            <person name="Lucas S."/>
            <person name="Copeland A."/>
            <person name="Lapidus A."/>
            <person name="Glavina del Rio T."/>
            <person name="Tice H."/>
            <person name="Bruce D."/>
            <person name="Goodwin L."/>
            <person name="Pitluck S."/>
            <person name="Sims D."/>
            <person name="Lu M."/>
            <person name="Kiss H."/>
            <person name="Meineke L."/>
            <person name="Brettin T."/>
            <person name="Detter J.C."/>
            <person name="Han C."/>
            <person name="Larimer F."/>
            <person name="Land M."/>
            <person name="Hauser L."/>
            <person name="Kyrpides N."/>
            <person name="Ovchinnikova G."/>
            <person name="Hazen T.C."/>
        </authorList>
    </citation>
    <scope>NUCLEOTIDE SEQUENCE [LARGE SCALE GENOMIC DNA]</scope>
    <source>
        <strain>ATCC 27774 / DSM 6949 / MB</strain>
    </source>
</reference>
<gene>
    <name evidence="1" type="primary">rplJ</name>
    <name type="ordered locus">Ddes_1634</name>
</gene>
<name>RL10_DESDA</name>
<protein>
    <recommendedName>
        <fullName evidence="1">Large ribosomal subunit protein uL10</fullName>
    </recommendedName>
    <alternativeName>
        <fullName evidence="2">50S ribosomal protein L10</fullName>
    </alternativeName>
</protein>
<proteinExistence type="inferred from homology"/>
<accession>B8J1A6</accession>
<sequence>MKRSEKAAVIEAIKAKADKASFAVLTDFKGMTVEELTNLRGSLRKAGGEYLVVKNTLARIALTDGTHDVIKDKFRENIGVAFGFDDPVAVAKALSDFAKQSKLFELRCASLDGKALEVAQIDALAKLPGREQLLGHLLGTMNAVPTNFVSLFANVLRGLLYALKGIEEQKSNAA</sequence>